<evidence type="ECO:0000269" key="1">
    <source>
    </source>
</evidence>
<evidence type="ECO:0000269" key="2">
    <source>
    </source>
</evidence>
<evidence type="ECO:0000303" key="3">
    <source>
    </source>
</evidence>
<evidence type="ECO:0000303" key="4">
    <source>
    </source>
</evidence>
<evidence type="ECO:0000305" key="5"/>
<evidence type="ECO:0000305" key="6">
    <source>
    </source>
</evidence>
<evidence type="ECO:0000312" key="7">
    <source>
        <dbReference type="EMBL" id="ABJ14220.1"/>
    </source>
</evidence>
<comment type="function">
    <text evidence="2">Catalyzes the nucleophilic attack of one alpha-aminobutanoate moiety from SAM onto L-histidine to produce the intermediate (2S)-2-amino-4-{[(1S)-1-carboxy-2-(1H-imidazol-4-yl)ethyl]amino}butanoate. Functions in the biosynthesis of the metallophore pseudopaline, which is involved in the acquisition of nickel and zinc, and thus enables bacterial growth inside the host, where metal access is limited. Therefore, this enzyme probably contributes to Pseudomonas virulence. Cannot use D-histidine in place of L-histidine as substrate.</text>
</comment>
<comment type="catalytic activity">
    <reaction evidence="2">
        <text>L-histidine + S-adenosyl-L-methionine = (2S)-2-amino-4-{[(1S)-1-carboxy-2-(1H-imidazol-4-yl)ethyl]amino}butanoate + S-methyl-5'-thioadenosine + H(+)</text>
        <dbReference type="Rhea" id="RHEA:59780"/>
        <dbReference type="ChEBI" id="CHEBI:15378"/>
        <dbReference type="ChEBI" id="CHEBI:17509"/>
        <dbReference type="ChEBI" id="CHEBI:57595"/>
        <dbReference type="ChEBI" id="CHEBI:59789"/>
        <dbReference type="ChEBI" id="CHEBI:143196"/>
    </reaction>
    <physiologicalReaction direction="left-to-right" evidence="2">
        <dbReference type="Rhea" id="RHEA:59781"/>
    </physiologicalReaction>
</comment>
<comment type="subunit">
    <text evidence="2">Interacts with CntM.</text>
</comment>
<comment type="induction">
    <text evidence="1 2">Is part of the operon cntOLMI that is negatively regulated by zinc level through the Zur repressor, which leads to transcriptional activation of this operon under zinc depletion.</text>
</comment>
<comment type="disruption phenotype">
    <text evidence="2">Cells lacking this gene are unable to synthesize pseudopaline and are impaired in their ability to import nickel in a minimal media, supplemented or not with nickel. Under more stringent conditions where a chelator such as EDTA is added to a minimal succinate (MS) medium, a condition that presumably mimics the chelating environment prevailing within a host or in airway mucus secretion (AMS), the deletion mutant strain is unable to import zinc, therefore reconciling the regulation of this operon by zinc with its function as a zinc importer operating in metal scarce conditions.</text>
</comment>
<comment type="similarity">
    <text evidence="5">Belongs to the methyltransferase superfamily. CntL family.</text>
</comment>
<feature type="chain" id="PRO_0000447036" description="L-histidine 2-aminobutanoyltransferase">
    <location>
        <begin position="1"/>
        <end position="263"/>
    </location>
</feature>
<dbReference type="EC" id="2.5.1.-" evidence="2"/>
<dbReference type="EMBL" id="CP000438">
    <property type="protein sequence ID" value="ABJ14220.1"/>
    <property type="molecule type" value="Genomic_DNA"/>
</dbReference>
<dbReference type="RefSeq" id="WP_003095359.1">
    <property type="nucleotide sequence ID" value="NZ_CP034244.1"/>
</dbReference>
<dbReference type="SMR" id="A0A0H2ZHV3"/>
<dbReference type="KEGG" id="pau:PA14_63940"/>
<dbReference type="HOGENOM" id="CLU_089313_0_0_6"/>
<dbReference type="BioCyc" id="PAER208963:G1G74-5406-MONOMER"/>
<dbReference type="Proteomes" id="UP000000653">
    <property type="component" value="Chromosome"/>
</dbReference>
<dbReference type="GO" id="GO:0030410">
    <property type="term" value="F:nicotianamine synthase activity"/>
    <property type="evidence" value="ECO:0007669"/>
    <property type="project" value="InterPro"/>
</dbReference>
<dbReference type="GO" id="GO:0030418">
    <property type="term" value="P:nicotianamine biosynthetic process"/>
    <property type="evidence" value="ECO:0007669"/>
    <property type="project" value="InterPro"/>
</dbReference>
<dbReference type="Gene3D" id="3.40.50.150">
    <property type="entry name" value="Vaccinia Virus protein VP39"/>
    <property type="match status" value="1"/>
</dbReference>
<dbReference type="InterPro" id="IPR004298">
    <property type="entry name" value="Nicotian_synth"/>
</dbReference>
<dbReference type="InterPro" id="IPR029063">
    <property type="entry name" value="SAM-dependent_MTases_sf"/>
</dbReference>
<dbReference type="PANTHER" id="PTHR32266">
    <property type="entry name" value="NICOTIANAMINE SYNTHASE 3"/>
    <property type="match status" value="1"/>
</dbReference>
<dbReference type="PANTHER" id="PTHR32266:SF12">
    <property type="entry name" value="NICOTIANAMINE SYNTHASE 3"/>
    <property type="match status" value="1"/>
</dbReference>
<dbReference type="Pfam" id="PF03059">
    <property type="entry name" value="NAS"/>
    <property type="match status" value="1"/>
</dbReference>
<dbReference type="SUPFAM" id="SSF53335">
    <property type="entry name" value="S-adenosyl-L-methionine-dependent methyltransferases"/>
    <property type="match status" value="1"/>
</dbReference>
<name>NASLL_PSEAB</name>
<keyword id="KW-0949">S-adenosyl-L-methionine</keyword>
<keyword id="KW-0808">Transferase</keyword>
<sequence>MQGRTPLLETLRELECEIRLLTVYARECCGCYEILRRKLDRLSGLIGEDCSRAQWQADSDDPALQALGLRLRDAAVQALCELEKHLCQGVLHEPGEMGRYLGSLLESIRGELDSAGIDADARVLFVGSGALPTSALVLAREVGAHLCCLDIDEEALGYAREIARCQGLEARMQFSSLPPAELAFSRDATHFLIASLVQQKSAVLAQIRQVMRADAKVLLRHGSGIKGLFNYPVEPAELEGWQVCAERVSQPLYDTLILEKAGR</sequence>
<gene>
    <name evidence="4" type="primary">cntL</name>
    <name evidence="3" type="synonym">zrmB</name>
    <name evidence="7" type="ordered locus">PA14_63940</name>
</gene>
<organism>
    <name type="scientific">Pseudomonas aeruginosa (strain UCBPP-PA14)</name>
    <dbReference type="NCBI Taxonomy" id="208963"/>
    <lineage>
        <taxon>Bacteria</taxon>
        <taxon>Pseudomonadati</taxon>
        <taxon>Pseudomonadota</taxon>
        <taxon>Gammaproteobacteria</taxon>
        <taxon>Pseudomonadales</taxon>
        <taxon>Pseudomonadaceae</taxon>
        <taxon>Pseudomonas</taxon>
    </lineage>
</organism>
<proteinExistence type="evidence at protein level"/>
<protein>
    <recommendedName>
        <fullName evidence="6">L-histidine 2-aminobutanoyltransferase</fullName>
        <ecNumber evidence="2">2.5.1.-</ecNumber>
    </recommendedName>
    <alternativeName>
        <fullName>Nicotianamine synthase-like enzyme</fullName>
        <shortName>NAS</shortName>
    </alternativeName>
</protein>
<reference key="1">
    <citation type="journal article" date="2006" name="Genome Biol.">
        <title>Genomic analysis reveals that Pseudomonas aeruginosa virulence is combinatorial.</title>
        <authorList>
            <person name="Lee D.G."/>
            <person name="Urbach J.M."/>
            <person name="Wu G."/>
            <person name="Liberati N.T."/>
            <person name="Feinbaum R.L."/>
            <person name="Miyata S."/>
            <person name="Diggins L.T."/>
            <person name="He J."/>
            <person name="Saucier M."/>
            <person name="Deziel E."/>
            <person name="Friedman L."/>
            <person name="Li L."/>
            <person name="Grills G."/>
            <person name="Montgomery K."/>
            <person name="Kucherlapati R."/>
            <person name="Rahme L.G."/>
            <person name="Ausubel F.M."/>
        </authorList>
    </citation>
    <scope>NUCLEOTIDE SEQUENCE [LARGE SCALE GENOMIC DNA]</scope>
    <source>
        <strain>UCBPP-PA14</strain>
    </source>
</reference>
<reference key="2">
    <citation type="journal article" date="2017" name="Mol. Microbiol.">
        <title>Growth of Pseudomonas aeruginosa in zinc poor environments is promoted by a nicotianamine-related metallophore.</title>
        <authorList>
            <person name="Mastropasqua M.C."/>
            <person name="D'Orazio M."/>
            <person name="Cerasi M."/>
            <person name="Pacello F."/>
            <person name="Gismondi A."/>
            <person name="Canini A."/>
            <person name="Canuti L."/>
            <person name="Consalvo A."/>
            <person name="Ciavardelli D."/>
            <person name="Chirullo B."/>
            <person name="Pasquali P."/>
            <person name="Battistoni A."/>
        </authorList>
    </citation>
    <scope>INDUCTION</scope>
    <source>
        <strain>UCBPP-PA14</strain>
    </source>
</reference>
<reference key="3">
    <citation type="journal article" date="2017" name="Sci. Rep.">
        <title>Pseudomonas aeruginosa zinc uptake in chelating environment is primarily mediated by the metallophore pseudopaline.</title>
        <authorList>
            <person name="Lhospice S."/>
            <person name="Gomez N.O."/>
            <person name="Ouerdane L."/>
            <person name="Brutesco C."/>
            <person name="Ghssein G."/>
            <person name="Hajjar C."/>
            <person name="Liratni A."/>
            <person name="Wang S."/>
            <person name="Richaud P."/>
            <person name="Bleves S."/>
            <person name="Ball G."/>
            <person name="Borezee-Durant E."/>
            <person name="Lobinski R."/>
            <person name="Pignol D."/>
            <person name="Arnoux P."/>
            <person name="Voulhoux R."/>
        </authorList>
    </citation>
    <scope>FUNCTION</scope>
    <scope>CATALYTIC ACTIVITY</scope>
    <scope>SUBSTRATE SPECIFICITY</scope>
    <scope>INDUCTION</scope>
    <scope>DISRUPTION PHENOTYPE</scope>
    <scope>INTERACTION WITH CNTM</scope>
    <source>
        <strain>UCBPP-PA14</strain>
    </source>
</reference>
<accession>A0A0H2ZHV3</accession>